<organism>
    <name type="scientific">Azobacteroides pseudotrichonymphae genomovar. CFP2</name>
    <dbReference type="NCBI Taxonomy" id="511995"/>
    <lineage>
        <taxon>Bacteria</taxon>
        <taxon>Pseudomonadati</taxon>
        <taxon>Bacteroidota</taxon>
        <taxon>Bacteroidia</taxon>
        <taxon>Bacteroidales</taxon>
        <taxon>Candidatus Azobacteroides</taxon>
    </lineage>
</organism>
<feature type="chain" id="PRO_1000211899" description="Asparagine--tRNA ligase">
    <location>
        <begin position="1"/>
        <end position="464"/>
    </location>
</feature>
<reference key="1">
    <citation type="journal article" date="2008" name="Science">
        <title>Genome of an endosymbiont coupling N2 fixation to cellulolysis within RT protist cells in termite gut.</title>
        <authorList>
            <person name="Hongoh Y."/>
            <person name="Sharma V.K."/>
            <person name="Prakash T."/>
            <person name="Noda S."/>
            <person name="Toh H."/>
            <person name="Taylor T.D."/>
            <person name="Kudo T."/>
            <person name="Sakaki Y."/>
            <person name="Toyoda A."/>
            <person name="Hattori M."/>
            <person name="Ohkuma M."/>
        </authorList>
    </citation>
    <scope>NUCLEOTIDE SEQUENCE [LARGE SCALE GENOMIC DNA]</scope>
</reference>
<keyword id="KW-0030">Aminoacyl-tRNA synthetase</keyword>
<keyword id="KW-0067">ATP-binding</keyword>
<keyword id="KW-0963">Cytoplasm</keyword>
<keyword id="KW-0436">Ligase</keyword>
<keyword id="KW-0547">Nucleotide-binding</keyword>
<keyword id="KW-0648">Protein biosynthesis</keyword>
<keyword id="KW-1185">Reference proteome</keyword>
<evidence type="ECO:0000255" key="1">
    <source>
        <dbReference type="HAMAP-Rule" id="MF_00534"/>
    </source>
</evidence>
<comment type="catalytic activity">
    <reaction evidence="1">
        <text>tRNA(Asn) + L-asparagine + ATP = L-asparaginyl-tRNA(Asn) + AMP + diphosphate + H(+)</text>
        <dbReference type="Rhea" id="RHEA:11180"/>
        <dbReference type="Rhea" id="RHEA-COMP:9659"/>
        <dbReference type="Rhea" id="RHEA-COMP:9674"/>
        <dbReference type="ChEBI" id="CHEBI:15378"/>
        <dbReference type="ChEBI" id="CHEBI:30616"/>
        <dbReference type="ChEBI" id="CHEBI:33019"/>
        <dbReference type="ChEBI" id="CHEBI:58048"/>
        <dbReference type="ChEBI" id="CHEBI:78442"/>
        <dbReference type="ChEBI" id="CHEBI:78515"/>
        <dbReference type="ChEBI" id="CHEBI:456215"/>
        <dbReference type="EC" id="6.1.1.22"/>
    </reaction>
</comment>
<comment type="subunit">
    <text evidence="1">Homodimer.</text>
</comment>
<comment type="subcellular location">
    <subcellularLocation>
        <location evidence="1">Cytoplasm</location>
    </subcellularLocation>
</comment>
<comment type="similarity">
    <text evidence="1">Belongs to the class-II aminoacyl-tRNA synthetase family.</text>
</comment>
<proteinExistence type="inferred from homology"/>
<accession>B6YRL1</accession>
<sequence length="464" mass="53542">MKMKRARIVDLLSTPDFNRKVCVKGWVRTRRGNKNISFIELNDGSTVHGIQIVVNVVKLGEDSLKSITTGACIAINGLLVKSKGEGQKVEIQADEIEIYGIADPSVYPLQKKWHSLEFLREIAYLRPRTNTFGCILRIRHHLAYAIHKYFNKQGFFYFHTPIITSSDAEGAGSMFQITDLDIANCPKTKDGEVDYTRDFFGCSTNLTVSGQLEGELGALALGGIYTFGPIFRAEKSNTPRHLAEFWMIEPEIAFYDINDNMDLAEDFLKYIISYAMKYCKDDIEFLNNTYNNELIEHLNFVLSNRFVRLAYSEGIRILEQSNEEFEFPIYWGIDLQSEHERYLVEKYFKCPVIMTNYPKDIKSFYMKQNDDGRTVRGMDVLFPRIGEIIGGSERESDHQKLLKRIKELNMSMDNLWWYLDTRRFGTAPHSGFGLGFERLVLFVTGMQNIRDVIPFPRTPKNAEF</sequence>
<dbReference type="EC" id="6.1.1.22" evidence="1"/>
<dbReference type="EMBL" id="AP010656">
    <property type="protein sequence ID" value="BAG83833.1"/>
    <property type="molecule type" value="Genomic_DNA"/>
</dbReference>
<dbReference type="RefSeq" id="WP_012573593.1">
    <property type="nucleotide sequence ID" value="NC_011565.1"/>
</dbReference>
<dbReference type="SMR" id="B6YRL1"/>
<dbReference type="STRING" id="511995.CFPG_570"/>
<dbReference type="KEGG" id="aps:CFPG_570"/>
<dbReference type="eggNOG" id="COG0017">
    <property type="taxonomic scope" value="Bacteria"/>
</dbReference>
<dbReference type="HOGENOM" id="CLU_004553_2_0_10"/>
<dbReference type="Proteomes" id="UP000000723">
    <property type="component" value="Chromosome"/>
</dbReference>
<dbReference type="GO" id="GO:0005737">
    <property type="term" value="C:cytoplasm"/>
    <property type="evidence" value="ECO:0007669"/>
    <property type="project" value="UniProtKB-SubCell"/>
</dbReference>
<dbReference type="GO" id="GO:0004816">
    <property type="term" value="F:asparagine-tRNA ligase activity"/>
    <property type="evidence" value="ECO:0007669"/>
    <property type="project" value="UniProtKB-UniRule"/>
</dbReference>
<dbReference type="GO" id="GO:0005524">
    <property type="term" value="F:ATP binding"/>
    <property type="evidence" value="ECO:0007669"/>
    <property type="project" value="UniProtKB-UniRule"/>
</dbReference>
<dbReference type="GO" id="GO:0003676">
    <property type="term" value="F:nucleic acid binding"/>
    <property type="evidence" value="ECO:0007669"/>
    <property type="project" value="InterPro"/>
</dbReference>
<dbReference type="GO" id="GO:0006421">
    <property type="term" value="P:asparaginyl-tRNA aminoacylation"/>
    <property type="evidence" value="ECO:0007669"/>
    <property type="project" value="UniProtKB-UniRule"/>
</dbReference>
<dbReference type="CDD" id="cd00776">
    <property type="entry name" value="AsxRS_core"/>
    <property type="match status" value="1"/>
</dbReference>
<dbReference type="CDD" id="cd04318">
    <property type="entry name" value="EcAsnRS_like_N"/>
    <property type="match status" value="1"/>
</dbReference>
<dbReference type="FunFam" id="3.30.930.10:FF:000016">
    <property type="entry name" value="Asparagine--tRNA ligase"/>
    <property type="match status" value="1"/>
</dbReference>
<dbReference type="Gene3D" id="3.30.930.10">
    <property type="entry name" value="Bira Bifunctional Protein, Domain 2"/>
    <property type="match status" value="1"/>
</dbReference>
<dbReference type="Gene3D" id="2.40.50.140">
    <property type="entry name" value="Nucleic acid-binding proteins"/>
    <property type="match status" value="1"/>
</dbReference>
<dbReference type="HAMAP" id="MF_00534">
    <property type="entry name" value="Asn_tRNA_synth"/>
    <property type="match status" value="1"/>
</dbReference>
<dbReference type="InterPro" id="IPR004364">
    <property type="entry name" value="Aa-tRNA-synt_II"/>
</dbReference>
<dbReference type="InterPro" id="IPR006195">
    <property type="entry name" value="aa-tRNA-synth_II"/>
</dbReference>
<dbReference type="InterPro" id="IPR045864">
    <property type="entry name" value="aa-tRNA-synth_II/BPL/LPL"/>
</dbReference>
<dbReference type="InterPro" id="IPR004522">
    <property type="entry name" value="Asn-tRNA-ligase"/>
</dbReference>
<dbReference type="InterPro" id="IPR002312">
    <property type="entry name" value="Asp/Asn-tRNA-synth_IIb"/>
</dbReference>
<dbReference type="InterPro" id="IPR012340">
    <property type="entry name" value="NA-bd_OB-fold"/>
</dbReference>
<dbReference type="InterPro" id="IPR004365">
    <property type="entry name" value="NA-bd_OB_tRNA"/>
</dbReference>
<dbReference type="NCBIfam" id="TIGR00457">
    <property type="entry name" value="asnS"/>
    <property type="match status" value="1"/>
</dbReference>
<dbReference type="NCBIfam" id="NF003037">
    <property type="entry name" value="PRK03932.1"/>
    <property type="match status" value="1"/>
</dbReference>
<dbReference type="PANTHER" id="PTHR22594:SF34">
    <property type="entry name" value="ASPARAGINE--TRNA LIGASE, MITOCHONDRIAL-RELATED"/>
    <property type="match status" value="1"/>
</dbReference>
<dbReference type="PANTHER" id="PTHR22594">
    <property type="entry name" value="ASPARTYL/LYSYL-TRNA SYNTHETASE"/>
    <property type="match status" value="1"/>
</dbReference>
<dbReference type="Pfam" id="PF00152">
    <property type="entry name" value="tRNA-synt_2"/>
    <property type="match status" value="1"/>
</dbReference>
<dbReference type="Pfam" id="PF01336">
    <property type="entry name" value="tRNA_anti-codon"/>
    <property type="match status" value="1"/>
</dbReference>
<dbReference type="PRINTS" id="PR01042">
    <property type="entry name" value="TRNASYNTHASP"/>
</dbReference>
<dbReference type="SUPFAM" id="SSF55681">
    <property type="entry name" value="Class II aaRS and biotin synthetases"/>
    <property type="match status" value="1"/>
</dbReference>
<dbReference type="SUPFAM" id="SSF50249">
    <property type="entry name" value="Nucleic acid-binding proteins"/>
    <property type="match status" value="1"/>
</dbReference>
<dbReference type="PROSITE" id="PS50862">
    <property type="entry name" value="AA_TRNA_LIGASE_II"/>
    <property type="match status" value="1"/>
</dbReference>
<protein>
    <recommendedName>
        <fullName evidence="1">Asparagine--tRNA ligase</fullName>
        <ecNumber evidence="1">6.1.1.22</ecNumber>
    </recommendedName>
    <alternativeName>
        <fullName evidence="1">Asparaginyl-tRNA synthetase</fullName>
        <shortName evidence="1">AsnRS</shortName>
    </alternativeName>
</protein>
<gene>
    <name evidence="1" type="primary">asnS</name>
    <name type="ordered locus">CFPG_570</name>
</gene>
<name>SYN_AZOPC</name>